<name>SWF1_KLULA</name>
<accession>Q6CJC5</accession>
<proteinExistence type="inferred from homology"/>
<feature type="chain" id="PRO_0000212990" description="Palmitoyltransferase SWF1">
    <location>
        <begin position="1"/>
        <end position="324"/>
    </location>
</feature>
<feature type="topological domain" description="Lumenal" evidence="2">
    <location>
        <position position="1"/>
    </location>
</feature>
<feature type="transmembrane region" description="Helical" evidence="2">
    <location>
        <begin position="2"/>
        <end position="22"/>
    </location>
</feature>
<feature type="topological domain" description="Cytoplasmic" evidence="2">
    <location>
        <begin position="23"/>
        <end position="49"/>
    </location>
</feature>
<feature type="transmembrane region" description="Helical" evidence="2">
    <location>
        <begin position="50"/>
        <end position="70"/>
    </location>
</feature>
<feature type="topological domain" description="Lumenal" evidence="2">
    <location>
        <begin position="71"/>
        <end position="84"/>
    </location>
</feature>
<feature type="transmembrane region" description="Helical" evidence="2">
    <location>
        <begin position="85"/>
        <end position="105"/>
    </location>
</feature>
<feature type="topological domain" description="Cytoplasmic" evidence="2">
    <location>
        <begin position="106"/>
        <end position="173"/>
    </location>
</feature>
<feature type="transmembrane region" description="Helical" evidence="2">
    <location>
        <begin position="174"/>
        <end position="194"/>
    </location>
</feature>
<feature type="topological domain" description="Lumenal" evidence="2">
    <location>
        <begin position="195"/>
        <end position="203"/>
    </location>
</feature>
<feature type="transmembrane region" description="Helical" evidence="2">
    <location>
        <begin position="204"/>
        <end position="224"/>
    </location>
</feature>
<feature type="topological domain" description="Cytoplasmic" evidence="2">
    <location>
        <begin position="225"/>
        <end position="324"/>
    </location>
</feature>
<feature type="domain" description="DHHC" evidence="3">
    <location>
        <begin position="127"/>
        <end position="177"/>
    </location>
</feature>
<organism>
    <name type="scientific">Kluyveromyces lactis (strain ATCC 8585 / CBS 2359 / DSM 70799 / NBRC 1267 / NRRL Y-1140 / WM37)</name>
    <name type="common">Yeast</name>
    <name type="synonym">Candida sphaerica</name>
    <dbReference type="NCBI Taxonomy" id="284590"/>
    <lineage>
        <taxon>Eukaryota</taxon>
        <taxon>Fungi</taxon>
        <taxon>Dikarya</taxon>
        <taxon>Ascomycota</taxon>
        <taxon>Saccharomycotina</taxon>
        <taxon>Saccharomycetes</taxon>
        <taxon>Saccharomycetales</taxon>
        <taxon>Saccharomycetaceae</taxon>
        <taxon>Kluyveromyces</taxon>
    </lineage>
</organism>
<sequence>MFLLFLLFVVSQVGLLVFSPKFKDLILFRWYYQHIYYPLFTDYTRYRWKYWLVPGFYACILIFCVHLFYNKLNDTVNPYLYSLEKAFIPITIAFTSLTGVASVFVKPLGLQAGPQFQPDYIIFHPSAVCQTCKTIKVPRSKHCPICERCIPLHDHHCIWINNCVGYGNYEYFYSFLLSNCLLLTYASLRLLTLFRITAFKKDKFFLSLFLLTTAFSLIAIVFTYYQLKLVNDGMTNNEQDKWYLVQEYMRNGNLVKDMDGVLYYRSMSTDAQTAEPIFYSTNLYDHSKYHLINPAKILSHEEIINLYDRGSFLDNLKERIHLLD</sequence>
<gene>
    <name type="primary">SWF1</name>
    <name type="ordered locus">KLLA0F19690g</name>
</gene>
<comment type="function">
    <text evidence="1">Palmitoyltransferase that targets several endosomal SNAREs. Palmitoylates the SNAREs at cysteine residues close to the cytoplasmic end of their transmembrane domain. May have a role in the cellular quality control of transmembrane domain-containing proteins (By similarity).</text>
</comment>
<comment type="catalytic activity">
    <reaction>
        <text>L-cysteinyl-[protein] + hexadecanoyl-CoA = S-hexadecanoyl-L-cysteinyl-[protein] + CoA</text>
        <dbReference type="Rhea" id="RHEA:36683"/>
        <dbReference type="Rhea" id="RHEA-COMP:10131"/>
        <dbReference type="Rhea" id="RHEA-COMP:11032"/>
        <dbReference type="ChEBI" id="CHEBI:29950"/>
        <dbReference type="ChEBI" id="CHEBI:57287"/>
        <dbReference type="ChEBI" id="CHEBI:57379"/>
        <dbReference type="ChEBI" id="CHEBI:74151"/>
        <dbReference type="EC" id="2.3.1.225"/>
    </reaction>
</comment>
<comment type="subcellular location">
    <subcellularLocation>
        <location evidence="1">Endoplasmic reticulum membrane</location>
        <topology evidence="1">Multi-pass membrane protein</topology>
    </subcellularLocation>
</comment>
<comment type="domain">
    <text evidence="1">The DHHC domain is required for palmitoyltransferase activity.</text>
</comment>
<comment type="similarity">
    <text evidence="4">Belongs to the DHHC palmitoyltransferase family. SWF1 subfamily.</text>
</comment>
<reference key="1">
    <citation type="journal article" date="2004" name="Nature">
        <title>Genome evolution in yeasts.</title>
        <authorList>
            <person name="Dujon B."/>
            <person name="Sherman D."/>
            <person name="Fischer G."/>
            <person name="Durrens P."/>
            <person name="Casaregola S."/>
            <person name="Lafontaine I."/>
            <person name="de Montigny J."/>
            <person name="Marck C."/>
            <person name="Neuveglise C."/>
            <person name="Talla E."/>
            <person name="Goffard N."/>
            <person name="Frangeul L."/>
            <person name="Aigle M."/>
            <person name="Anthouard V."/>
            <person name="Babour A."/>
            <person name="Barbe V."/>
            <person name="Barnay S."/>
            <person name="Blanchin S."/>
            <person name="Beckerich J.-M."/>
            <person name="Beyne E."/>
            <person name="Bleykasten C."/>
            <person name="Boisrame A."/>
            <person name="Boyer J."/>
            <person name="Cattolico L."/>
            <person name="Confanioleri F."/>
            <person name="de Daruvar A."/>
            <person name="Despons L."/>
            <person name="Fabre E."/>
            <person name="Fairhead C."/>
            <person name="Ferry-Dumazet H."/>
            <person name="Groppi A."/>
            <person name="Hantraye F."/>
            <person name="Hennequin C."/>
            <person name="Jauniaux N."/>
            <person name="Joyet P."/>
            <person name="Kachouri R."/>
            <person name="Kerrest A."/>
            <person name="Koszul R."/>
            <person name="Lemaire M."/>
            <person name="Lesur I."/>
            <person name="Ma L."/>
            <person name="Muller H."/>
            <person name="Nicaud J.-M."/>
            <person name="Nikolski M."/>
            <person name="Oztas S."/>
            <person name="Ozier-Kalogeropoulos O."/>
            <person name="Pellenz S."/>
            <person name="Potier S."/>
            <person name="Richard G.-F."/>
            <person name="Straub M.-L."/>
            <person name="Suleau A."/>
            <person name="Swennen D."/>
            <person name="Tekaia F."/>
            <person name="Wesolowski-Louvel M."/>
            <person name="Westhof E."/>
            <person name="Wirth B."/>
            <person name="Zeniou-Meyer M."/>
            <person name="Zivanovic Y."/>
            <person name="Bolotin-Fukuhara M."/>
            <person name="Thierry A."/>
            <person name="Bouchier C."/>
            <person name="Caudron B."/>
            <person name="Scarpelli C."/>
            <person name="Gaillardin C."/>
            <person name="Weissenbach J."/>
            <person name="Wincker P."/>
            <person name="Souciet J.-L."/>
        </authorList>
    </citation>
    <scope>NUCLEOTIDE SEQUENCE [LARGE SCALE GENOMIC DNA]</scope>
    <source>
        <strain>ATCC 8585 / CBS 2359 / DSM 70799 / NBRC 1267 / NRRL Y-1140 / WM37</strain>
    </source>
</reference>
<evidence type="ECO:0000250" key="1"/>
<evidence type="ECO:0000255" key="2"/>
<evidence type="ECO:0000255" key="3">
    <source>
        <dbReference type="PROSITE-ProRule" id="PRU00067"/>
    </source>
</evidence>
<evidence type="ECO:0000305" key="4"/>
<dbReference type="EC" id="2.3.1.225"/>
<dbReference type="EMBL" id="CR382126">
    <property type="protein sequence ID" value="CAG98672.1"/>
    <property type="molecule type" value="Genomic_DNA"/>
</dbReference>
<dbReference type="RefSeq" id="XP_455964.1">
    <property type="nucleotide sequence ID" value="XM_455964.1"/>
</dbReference>
<dbReference type="SMR" id="Q6CJC5"/>
<dbReference type="FunCoup" id="Q6CJC5">
    <property type="interactions" value="42"/>
</dbReference>
<dbReference type="STRING" id="284590.Q6CJC5"/>
<dbReference type="PaxDb" id="284590-Q6CJC5"/>
<dbReference type="KEGG" id="kla:KLLA0_F19690g"/>
<dbReference type="eggNOG" id="KOG1312">
    <property type="taxonomic scope" value="Eukaryota"/>
</dbReference>
<dbReference type="HOGENOM" id="CLU_042181_2_0_1"/>
<dbReference type="InParanoid" id="Q6CJC5"/>
<dbReference type="OMA" id="STNAYDH"/>
<dbReference type="Proteomes" id="UP000000598">
    <property type="component" value="Chromosome F"/>
</dbReference>
<dbReference type="GO" id="GO:0005789">
    <property type="term" value="C:endoplasmic reticulum membrane"/>
    <property type="evidence" value="ECO:0007669"/>
    <property type="project" value="UniProtKB-SubCell"/>
</dbReference>
<dbReference type="GO" id="GO:0005794">
    <property type="term" value="C:Golgi apparatus"/>
    <property type="evidence" value="ECO:0007669"/>
    <property type="project" value="TreeGrafter"/>
</dbReference>
<dbReference type="GO" id="GO:0019706">
    <property type="term" value="F:protein-cysteine S-palmitoyltransferase activity"/>
    <property type="evidence" value="ECO:0007669"/>
    <property type="project" value="UniProtKB-EC"/>
</dbReference>
<dbReference type="GO" id="GO:0006612">
    <property type="term" value="P:protein targeting to membrane"/>
    <property type="evidence" value="ECO:0007669"/>
    <property type="project" value="TreeGrafter"/>
</dbReference>
<dbReference type="InterPro" id="IPR001594">
    <property type="entry name" value="Palmitoyltrfase_DHHC"/>
</dbReference>
<dbReference type="InterPro" id="IPR039859">
    <property type="entry name" value="PFA4/ZDH16/20/ERF2-like"/>
</dbReference>
<dbReference type="PANTHER" id="PTHR22883:SF489">
    <property type="entry name" value="PALMITOYLTRANSFERASE SWF1"/>
    <property type="match status" value="1"/>
</dbReference>
<dbReference type="PANTHER" id="PTHR22883">
    <property type="entry name" value="ZINC FINGER DHHC DOMAIN CONTAINING PROTEIN"/>
    <property type="match status" value="1"/>
</dbReference>
<dbReference type="Pfam" id="PF01529">
    <property type="entry name" value="DHHC"/>
    <property type="match status" value="1"/>
</dbReference>
<dbReference type="PROSITE" id="PS50216">
    <property type="entry name" value="DHHC"/>
    <property type="match status" value="1"/>
</dbReference>
<protein>
    <recommendedName>
        <fullName>Palmitoyltransferase SWF1</fullName>
        <ecNumber>2.3.1.225</ecNumber>
    </recommendedName>
</protein>
<keyword id="KW-0012">Acyltransferase</keyword>
<keyword id="KW-0256">Endoplasmic reticulum</keyword>
<keyword id="KW-0449">Lipoprotein</keyword>
<keyword id="KW-0472">Membrane</keyword>
<keyword id="KW-0564">Palmitate</keyword>
<keyword id="KW-1185">Reference proteome</keyword>
<keyword id="KW-0808">Transferase</keyword>
<keyword id="KW-0812">Transmembrane</keyword>
<keyword id="KW-1133">Transmembrane helix</keyword>